<proteinExistence type="inferred from homology"/>
<sequence length="324" mass="35276">MKQVNGQKLLDALGNGVSAIRGRITPDAPMDRVTWFRAGGLAELMFQPHDTDDLVAFLKLVPEEVPVMVIGVGSNLLVRDGGIPGVVIRLSAKGFGDLEIVGENRIKAGAICPDKNIAAMALDHGIGGFYFYYGIPGSIGGALRMNAGANGGETRERVVEVHAVDRRGNRHVLSNADMGYSYRHTAAAKDLIFTHAIFEGFPEDKAKIRHDMDAVRQHRETVQPIREKTGGSTFKNPEGNSAWKLIDEAGGRGMMIGGAQMSPLHCNFMINTGQASGYELEYLGETVRAQVLEHSGIKLEWEIKRIGKFMPGYEIKEFLGRADG</sequence>
<feature type="chain" id="PRO_1000117133" description="UDP-N-acetylenolpyruvoylglucosamine reductase">
    <location>
        <begin position="1"/>
        <end position="324"/>
    </location>
</feature>
<feature type="domain" description="FAD-binding PCMH-type" evidence="1">
    <location>
        <begin position="36"/>
        <end position="203"/>
    </location>
</feature>
<feature type="active site" evidence="1">
    <location>
        <position position="183"/>
    </location>
</feature>
<feature type="active site" description="Proton donor" evidence="1">
    <location>
        <position position="232"/>
    </location>
</feature>
<feature type="active site" evidence="1">
    <location>
        <position position="302"/>
    </location>
</feature>
<gene>
    <name evidence="1" type="primary">murB</name>
    <name type="ordered locus">NGR_c21050</name>
</gene>
<comment type="function">
    <text evidence="1">Cell wall formation.</text>
</comment>
<comment type="catalytic activity">
    <reaction evidence="1">
        <text>UDP-N-acetyl-alpha-D-muramate + NADP(+) = UDP-N-acetyl-3-O-(1-carboxyvinyl)-alpha-D-glucosamine + NADPH + H(+)</text>
        <dbReference type="Rhea" id="RHEA:12248"/>
        <dbReference type="ChEBI" id="CHEBI:15378"/>
        <dbReference type="ChEBI" id="CHEBI:57783"/>
        <dbReference type="ChEBI" id="CHEBI:58349"/>
        <dbReference type="ChEBI" id="CHEBI:68483"/>
        <dbReference type="ChEBI" id="CHEBI:70757"/>
        <dbReference type="EC" id="1.3.1.98"/>
    </reaction>
</comment>
<comment type="cofactor">
    <cofactor evidence="1">
        <name>FAD</name>
        <dbReference type="ChEBI" id="CHEBI:57692"/>
    </cofactor>
</comment>
<comment type="pathway">
    <text evidence="1">Cell wall biogenesis; peptidoglycan biosynthesis.</text>
</comment>
<comment type="subcellular location">
    <subcellularLocation>
        <location evidence="1">Cytoplasm</location>
    </subcellularLocation>
</comment>
<comment type="similarity">
    <text evidence="1">Belongs to the MurB family.</text>
</comment>
<evidence type="ECO:0000255" key="1">
    <source>
        <dbReference type="HAMAP-Rule" id="MF_00037"/>
    </source>
</evidence>
<accession>C3MEM7</accession>
<name>MURB_SINFN</name>
<protein>
    <recommendedName>
        <fullName evidence="1">UDP-N-acetylenolpyruvoylglucosamine reductase</fullName>
        <ecNumber evidence="1">1.3.1.98</ecNumber>
    </recommendedName>
    <alternativeName>
        <fullName evidence="1">UDP-N-acetylmuramate dehydrogenase</fullName>
    </alternativeName>
</protein>
<reference key="1">
    <citation type="journal article" date="2009" name="Appl. Environ. Microbiol.">
        <title>Rhizobium sp. strain NGR234 possesses a remarkable number of secretion systems.</title>
        <authorList>
            <person name="Schmeisser C."/>
            <person name="Liesegang H."/>
            <person name="Krysciak D."/>
            <person name="Bakkou N."/>
            <person name="Le Quere A."/>
            <person name="Wollherr A."/>
            <person name="Heinemeyer I."/>
            <person name="Morgenstern B."/>
            <person name="Pommerening-Roeser A."/>
            <person name="Flores M."/>
            <person name="Palacios R."/>
            <person name="Brenner S."/>
            <person name="Gottschalk G."/>
            <person name="Schmitz R.A."/>
            <person name="Broughton W.J."/>
            <person name="Perret X."/>
            <person name="Strittmatter A.W."/>
            <person name="Streit W.R."/>
        </authorList>
    </citation>
    <scope>NUCLEOTIDE SEQUENCE [LARGE SCALE GENOMIC DNA]</scope>
    <source>
        <strain>NBRC 101917 / NGR234</strain>
    </source>
</reference>
<organism>
    <name type="scientific">Sinorhizobium fredii (strain NBRC 101917 / NGR234)</name>
    <dbReference type="NCBI Taxonomy" id="394"/>
    <lineage>
        <taxon>Bacteria</taxon>
        <taxon>Pseudomonadati</taxon>
        <taxon>Pseudomonadota</taxon>
        <taxon>Alphaproteobacteria</taxon>
        <taxon>Hyphomicrobiales</taxon>
        <taxon>Rhizobiaceae</taxon>
        <taxon>Sinorhizobium/Ensifer group</taxon>
        <taxon>Sinorhizobium</taxon>
    </lineage>
</organism>
<keyword id="KW-0131">Cell cycle</keyword>
<keyword id="KW-0132">Cell division</keyword>
<keyword id="KW-0133">Cell shape</keyword>
<keyword id="KW-0961">Cell wall biogenesis/degradation</keyword>
<keyword id="KW-0963">Cytoplasm</keyword>
<keyword id="KW-0274">FAD</keyword>
<keyword id="KW-0285">Flavoprotein</keyword>
<keyword id="KW-0521">NADP</keyword>
<keyword id="KW-0560">Oxidoreductase</keyword>
<keyword id="KW-0573">Peptidoglycan synthesis</keyword>
<keyword id="KW-1185">Reference proteome</keyword>
<dbReference type="EC" id="1.3.1.98" evidence="1"/>
<dbReference type="EMBL" id="CP001389">
    <property type="protein sequence ID" value="ACP25868.1"/>
    <property type="molecule type" value="Genomic_DNA"/>
</dbReference>
<dbReference type="RefSeq" id="WP_012708631.1">
    <property type="nucleotide sequence ID" value="NC_012587.1"/>
</dbReference>
<dbReference type="RefSeq" id="YP_002826621.1">
    <property type="nucleotide sequence ID" value="NC_012587.1"/>
</dbReference>
<dbReference type="SMR" id="C3MEM7"/>
<dbReference type="STRING" id="394.NGR_c21050"/>
<dbReference type="KEGG" id="rhi:NGR_c21050"/>
<dbReference type="PATRIC" id="fig|394.7.peg.4930"/>
<dbReference type="eggNOG" id="COG0812">
    <property type="taxonomic scope" value="Bacteria"/>
</dbReference>
<dbReference type="HOGENOM" id="CLU_035304_1_0_5"/>
<dbReference type="OrthoDB" id="9804753at2"/>
<dbReference type="UniPathway" id="UPA00219"/>
<dbReference type="Proteomes" id="UP000001054">
    <property type="component" value="Chromosome"/>
</dbReference>
<dbReference type="GO" id="GO:0005829">
    <property type="term" value="C:cytosol"/>
    <property type="evidence" value="ECO:0007669"/>
    <property type="project" value="TreeGrafter"/>
</dbReference>
<dbReference type="GO" id="GO:0071949">
    <property type="term" value="F:FAD binding"/>
    <property type="evidence" value="ECO:0007669"/>
    <property type="project" value="InterPro"/>
</dbReference>
<dbReference type="GO" id="GO:0008762">
    <property type="term" value="F:UDP-N-acetylmuramate dehydrogenase activity"/>
    <property type="evidence" value="ECO:0007669"/>
    <property type="project" value="UniProtKB-UniRule"/>
</dbReference>
<dbReference type="GO" id="GO:0051301">
    <property type="term" value="P:cell division"/>
    <property type="evidence" value="ECO:0007669"/>
    <property type="project" value="UniProtKB-KW"/>
</dbReference>
<dbReference type="GO" id="GO:0071555">
    <property type="term" value="P:cell wall organization"/>
    <property type="evidence" value="ECO:0007669"/>
    <property type="project" value="UniProtKB-KW"/>
</dbReference>
<dbReference type="GO" id="GO:0009252">
    <property type="term" value="P:peptidoglycan biosynthetic process"/>
    <property type="evidence" value="ECO:0007669"/>
    <property type="project" value="UniProtKB-UniRule"/>
</dbReference>
<dbReference type="GO" id="GO:0008360">
    <property type="term" value="P:regulation of cell shape"/>
    <property type="evidence" value="ECO:0007669"/>
    <property type="project" value="UniProtKB-KW"/>
</dbReference>
<dbReference type="Gene3D" id="3.30.465.10">
    <property type="match status" value="1"/>
</dbReference>
<dbReference type="Gene3D" id="3.90.78.10">
    <property type="entry name" value="UDP-N-acetylenolpyruvoylglucosamine reductase, C-terminal domain"/>
    <property type="match status" value="1"/>
</dbReference>
<dbReference type="Gene3D" id="3.30.43.10">
    <property type="entry name" value="Uridine Diphospho-n-acetylenolpyruvylglucosamine Reductase, domain 2"/>
    <property type="match status" value="1"/>
</dbReference>
<dbReference type="HAMAP" id="MF_00037">
    <property type="entry name" value="MurB"/>
    <property type="match status" value="1"/>
</dbReference>
<dbReference type="InterPro" id="IPR016166">
    <property type="entry name" value="FAD-bd_PCMH"/>
</dbReference>
<dbReference type="InterPro" id="IPR036318">
    <property type="entry name" value="FAD-bd_PCMH-like_sf"/>
</dbReference>
<dbReference type="InterPro" id="IPR016167">
    <property type="entry name" value="FAD-bd_PCMH_sub1"/>
</dbReference>
<dbReference type="InterPro" id="IPR016169">
    <property type="entry name" value="FAD-bd_PCMH_sub2"/>
</dbReference>
<dbReference type="InterPro" id="IPR003170">
    <property type="entry name" value="MurB"/>
</dbReference>
<dbReference type="InterPro" id="IPR011601">
    <property type="entry name" value="MurB_C"/>
</dbReference>
<dbReference type="InterPro" id="IPR036635">
    <property type="entry name" value="MurB_C_sf"/>
</dbReference>
<dbReference type="InterPro" id="IPR006094">
    <property type="entry name" value="Oxid_FAD_bind_N"/>
</dbReference>
<dbReference type="NCBIfam" id="TIGR00179">
    <property type="entry name" value="murB"/>
    <property type="match status" value="1"/>
</dbReference>
<dbReference type="NCBIfam" id="NF010480">
    <property type="entry name" value="PRK13905.1"/>
    <property type="match status" value="1"/>
</dbReference>
<dbReference type="PANTHER" id="PTHR21071">
    <property type="entry name" value="UDP-N-ACETYLENOLPYRUVOYLGLUCOSAMINE REDUCTASE"/>
    <property type="match status" value="1"/>
</dbReference>
<dbReference type="PANTHER" id="PTHR21071:SF4">
    <property type="entry name" value="UDP-N-ACETYLENOLPYRUVOYLGLUCOSAMINE REDUCTASE"/>
    <property type="match status" value="1"/>
</dbReference>
<dbReference type="Pfam" id="PF01565">
    <property type="entry name" value="FAD_binding_4"/>
    <property type="match status" value="1"/>
</dbReference>
<dbReference type="Pfam" id="PF02873">
    <property type="entry name" value="MurB_C"/>
    <property type="match status" value="1"/>
</dbReference>
<dbReference type="SUPFAM" id="SSF56176">
    <property type="entry name" value="FAD-binding/transporter-associated domain-like"/>
    <property type="match status" value="1"/>
</dbReference>
<dbReference type="SUPFAM" id="SSF56194">
    <property type="entry name" value="Uridine diphospho-N-Acetylenolpyruvylglucosamine reductase, MurB, C-terminal domain"/>
    <property type="match status" value="1"/>
</dbReference>
<dbReference type="PROSITE" id="PS51387">
    <property type="entry name" value="FAD_PCMH"/>
    <property type="match status" value="1"/>
</dbReference>